<proteinExistence type="inferred from homology"/>
<organism>
    <name type="scientific">Salmonella heidelberg (strain SL476)</name>
    <dbReference type="NCBI Taxonomy" id="454169"/>
    <lineage>
        <taxon>Bacteria</taxon>
        <taxon>Pseudomonadati</taxon>
        <taxon>Pseudomonadota</taxon>
        <taxon>Gammaproteobacteria</taxon>
        <taxon>Enterobacterales</taxon>
        <taxon>Enterobacteriaceae</taxon>
        <taxon>Salmonella</taxon>
    </lineage>
</organism>
<accession>B4TET8</accession>
<keyword id="KW-0997">Cell inner membrane</keyword>
<keyword id="KW-1003">Cell membrane</keyword>
<keyword id="KW-0472">Membrane</keyword>
<keyword id="KW-0812">Transmembrane</keyword>
<keyword id="KW-1133">Transmembrane helix</keyword>
<keyword id="KW-0813">Transport</keyword>
<gene>
    <name evidence="1" type="primary">mdtH</name>
    <name type="ordered locus">SeHA_C1278</name>
</gene>
<dbReference type="EMBL" id="CP001120">
    <property type="protein sequence ID" value="ACF67061.1"/>
    <property type="molecule type" value="Genomic_DNA"/>
</dbReference>
<dbReference type="RefSeq" id="WP_000092178.1">
    <property type="nucleotide sequence ID" value="NC_011083.1"/>
</dbReference>
<dbReference type="SMR" id="B4TET8"/>
<dbReference type="KEGG" id="seh:SeHA_C1278"/>
<dbReference type="HOGENOM" id="CLU_001265_60_2_6"/>
<dbReference type="Proteomes" id="UP000001866">
    <property type="component" value="Chromosome"/>
</dbReference>
<dbReference type="GO" id="GO:0005886">
    <property type="term" value="C:plasma membrane"/>
    <property type="evidence" value="ECO:0007669"/>
    <property type="project" value="UniProtKB-SubCell"/>
</dbReference>
<dbReference type="GO" id="GO:0022857">
    <property type="term" value="F:transmembrane transporter activity"/>
    <property type="evidence" value="ECO:0007669"/>
    <property type="project" value="UniProtKB-UniRule"/>
</dbReference>
<dbReference type="CDD" id="cd17329">
    <property type="entry name" value="MFS_MdtH_MDR_like"/>
    <property type="match status" value="1"/>
</dbReference>
<dbReference type="FunFam" id="1.20.1250.20:FF:000039">
    <property type="entry name" value="Multidrug resistance protein MdtH"/>
    <property type="match status" value="1"/>
</dbReference>
<dbReference type="Gene3D" id="1.20.1250.20">
    <property type="entry name" value="MFS general substrate transporter like domains"/>
    <property type="match status" value="1"/>
</dbReference>
<dbReference type="HAMAP" id="MF_01529">
    <property type="entry name" value="MFS_MdtH"/>
    <property type="match status" value="1"/>
</dbReference>
<dbReference type="InterPro" id="IPR011701">
    <property type="entry name" value="MFS"/>
</dbReference>
<dbReference type="InterPro" id="IPR020846">
    <property type="entry name" value="MFS_dom"/>
</dbReference>
<dbReference type="InterPro" id="IPR036259">
    <property type="entry name" value="MFS_trans_sf"/>
</dbReference>
<dbReference type="InterPro" id="IPR050171">
    <property type="entry name" value="MFS_Transporters"/>
</dbReference>
<dbReference type="InterPro" id="IPR022855">
    <property type="entry name" value="Multidrug-R_MdtH"/>
</dbReference>
<dbReference type="NCBIfam" id="NF008650">
    <property type="entry name" value="PRK11646.1"/>
    <property type="match status" value="1"/>
</dbReference>
<dbReference type="PANTHER" id="PTHR23517:SF2">
    <property type="entry name" value="MULTIDRUG RESISTANCE PROTEIN MDTH"/>
    <property type="match status" value="1"/>
</dbReference>
<dbReference type="PANTHER" id="PTHR23517">
    <property type="entry name" value="RESISTANCE PROTEIN MDTM, PUTATIVE-RELATED-RELATED"/>
    <property type="match status" value="1"/>
</dbReference>
<dbReference type="Pfam" id="PF07690">
    <property type="entry name" value="MFS_1"/>
    <property type="match status" value="1"/>
</dbReference>
<dbReference type="SUPFAM" id="SSF103473">
    <property type="entry name" value="MFS general substrate transporter"/>
    <property type="match status" value="1"/>
</dbReference>
<dbReference type="PROSITE" id="PS50850">
    <property type="entry name" value="MFS"/>
    <property type="match status" value="1"/>
</dbReference>
<reference key="1">
    <citation type="journal article" date="2011" name="J. Bacteriol.">
        <title>Comparative genomics of 28 Salmonella enterica isolates: evidence for CRISPR-mediated adaptive sublineage evolution.</title>
        <authorList>
            <person name="Fricke W.F."/>
            <person name="Mammel M.K."/>
            <person name="McDermott P.F."/>
            <person name="Tartera C."/>
            <person name="White D.G."/>
            <person name="Leclerc J.E."/>
            <person name="Ravel J."/>
            <person name="Cebula T.A."/>
        </authorList>
    </citation>
    <scope>NUCLEOTIDE SEQUENCE [LARGE SCALE GENOMIC DNA]</scope>
    <source>
        <strain>SL476</strain>
    </source>
</reference>
<protein>
    <recommendedName>
        <fullName evidence="1">Multidrug resistance protein MdtH</fullName>
    </recommendedName>
</protein>
<feature type="chain" id="PRO_1000200808" description="Multidrug resistance protein MdtH">
    <location>
        <begin position="1"/>
        <end position="402"/>
    </location>
</feature>
<feature type="topological domain" description="Cytoplasmic" evidence="1">
    <location>
        <begin position="1"/>
        <end position="12"/>
    </location>
</feature>
<feature type="transmembrane region" description="Helical" evidence="1">
    <location>
        <begin position="13"/>
        <end position="33"/>
    </location>
</feature>
<feature type="topological domain" description="Periplasmic" evidence="1">
    <location>
        <begin position="34"/>
        <end position="98"/>
    </location>
</feature>
<feature type="transmembrane region" description="Helical" evidence="1">
    <location>
        <begin position="99"/>
        <end position="116"/>
    </location>
</feature>
<feature type="topological domain" description="Cytoplasmic" evidence="1">
    <location>
        <begin position="117"/>
        <end position="138"/>
    </location>
</feature>
<feature type="transmembrane region" description="Helical" evidence="1">
    <location>
        <begin position="139"/>
        <end position="159"/>
    </location>
</feature>
<feature type="topological domain" description="Periplasmic" evidence="1">
    <location>
        <begin position="160"/>
        <end position="164"/>
    </location>
</feature>
<feature type="transmembrane region" description="Helical" evidence="1">
    <location>
        <begin position="165"/>
        <end position="185"/>
    </location>
</feature>
<feature type="topological domain" description="Cytoplasmic" evidence="1">
    <location>
        <begin position="186"/>
        <end position="213"/>
    </location>
</feature>
<feature type="transmembrane region" description="Helical" evidence="1">
    <location>
        <begin position="214"/>
        <end position="234"/>
    </location>
</feature>
<feature type="topological domain" description="Periplasmic" evidence="1">
    <location>
        <begin position="235"/>
        <end position="243"/>
    </location>
</feature>
<feature type="transmembrane region" description="Helical" evidence="1">
    <location>
        <begin position="244"/>
        <end position="264"/>
    </location>
</feature>
<feature type="topological domain" description="Cytoplasmic" evidence="1">
    <location>
        <begin position="265"/>
        <end position="276"/>
    </location>
</feature>
<feature type="transmembrane region" description="Helical" evidence="1">
    <location>
        <begin position="277"/>
        <end position="297"/>
    </location>
</feature>
<feature type="topological domain" description="Periplasmic" evidence="1">
    <location>
        <begin position="298"/>
        <end position="299"/>
    </location>
</feature>
<feature type="transmembrane region" description="Helical" evidence="1">
    <location>
        <begin position="300"/>
        <end position="320"/>
    </location>
</feature>
<feature type="topological domain" description="Cytoplasmic" evidence="1">
    <location>
        <begin position="321"/>
        <end position="339"/>
    </location>
</feature>
<feature type="transmembrane region" description="Helical" evidence="1">
    <location>
        <begin position="340"/>
        <end position="360"/>
    </location>
</feature>
<feature type="topological domain" description="Periplasmic" evidence="1">
    <location>
        <begin position="361"/>
        <end position="367"/>
    </location>
</feature>
<feature type="transmembrane region" description="Helical" evidence="1">
    <location>
        <begin position="368"/>
        <end position="388"/>
    </location>
</feature>
<feature type="topological domain" description="Cytoplasmic" evidence="1">
    <location>
        <begin position="389"/>
        <end position="402"/>
    </location>
</feature>
<name>MDTH_SALHS</name>
<sequence length="402" mass="44384">MSRVSQARNLGKYFLLIDNMLVVLGFFVVFPLISIRFVDQMGWAAVMVGIALGLRQFIQQGLGIFGGAIADRFGAKPMIVTGMLMRAAGFATMGIAHEPWLLWFSCFLSGLGGTLFDPPRSALVVKLIRPEQRGRFFSLLMMQDSAGAVIGALLGSWLLQYDFRLVCATGAILFILCALFNAWLLPAWKLSTVRTPVREGMRRVMSDKRFVTYVLTLAGYYMLAVQVMLMLPIMVNDIAGSPAAVKWMYAIEACLSLTLLYPIARWSEKRFRLEHRLMAGLLVMSLSMLPIGMVGNLQQLFTLICAFYIGSVIAEPARETLSASLADARARGSYMGFSRLGLAIGGAIGYIGGGWLFDMGKALAQPELPWMMLGIIGFITFLALGWQFSHKRTPRRMLEPGA</sequence>
<evidence type="ECO:0000255" key="1">
    <source>
        <dbReference type="HAMAP-Rule" id="MF_01529"/>
    </source>
</evidence>
<comment type="subcellular location">
    <subcellularLocation>
        <location evidence="1">Cell inner membrane</location>
        <topology evidence="1">Multi-pass membrane protein</topology>
    </subcellularLocation>
</comment>
<comment type="similarity">
    <text evidence="1">Belongs to the major facilitator superfamily. DHA1 family. MdtH (TC 2.A.1.2.21) subfamily.</text>
</comment>